<comment type="similarity">
    <text evidence="1">Belongs to the bacterial ribosomal protein bS16 family.</text>
</comment>
<accession>Q8UBZ9</accession>
<feature type="chain" id="PRO_0000167144" description="Small ribosomal subunit protein bS16">
    <location>
        <begin position="1"/>
        <end position="126"/>
    </location>
</feature>
<feature type="region of interest" description="Disordered" evidence="2">
    <location>
        <begin position="87"/>
        <end position="126"/>
    </location>
</feature>
<feature type="compositionally biased region" description="Basic and acidic residues" evidence="2">
    <location>
        <begin position="99"/>
        <end position="113"/>
    </location>
</feature>
<feature type="compositionally biased region" description="Low complexity" evidence="2">
    <location>
        <begin position="114"/>
        <end position="126"/>
    </location>
</feature>
<dbReference type="EMBL" id="AE007869">
    <property type="protein sequence ID" value="AAK88419.1"/>
    <property type="molecule type" value="Genomic_DNA"/>
</dbReference>
<dbReference type="PIR" id="AB2908">
    <property type="entry name" value="AB2908"/>
</dbReference>
<dbReference type="PIR" id="B97683">
    <property type="entry name" value="B97683"/>
</dbReference>
<dbReference type="RefSeq" id="NP_355634.1">
    <property type="nucleotide sequence ID" value="NC_003062.2"/>
</dbReference>
<dbReference type="RefSeq" id="WP_010972498.1">
    <property type="nucleotide sequence ID" value="NC_003062.2"/>
</dbReference>
<dbReference type="SMR" id="Q8UBZ9"/>
<dbReference type="STRING" id="176299.Atu2699"/>
<dbReference type="EnsemblBacteria" id="AAK88419">
    <property type="protein sequence ID" value="AAK88419"/>
    <property type="gene ID" value="Atu2699"/>
</dbReference>
<dbReference type="GeneID" id="1134737"/>
<dbReference type="KEGG" id="atu:Atu2699"/>
<dbReference type="PATRIC" id="fig|176299.10.peg.2709"/>
<dbReference type="eggNOG" id="COG0228">
    <property type="taxonomic scope" value="Bacteria"/>
</dbReference>
<dbReference type="HOGENOM" id="CLU_100590_3_1_5"/>
<dbReference type="OrthoDB" id="9807878at2"/>
<dbReference type="PhylomeDB" id="Q8UBZ9"/>
<dbReference type="BioCyc" id="AGRO:ATU2699-MONOMER"/>
<dbReference type="Proteomes" id="UP000000813">
    <property type="component" value="Chromosome circular"/>
</dbReference>
<dbReference type="GO" id="GO:0005737">
    <property type="term" value="C:cytoplasm"/>
    <property type="evidence" value="ECO:0007669"/>
    <property type="project" value="UniProtKB-ARBA"/>
</dbReference>
<dbReference type="GO" id="GO:0015935">
    <property type="term" value="C:small ribosomal subunit"/>
    <property type="evidence" value="ECO:0007669"/>
    <property type="project" value="TreeGrafter"/>
</dbReference>
<dbReference type="GO" id="GO:0003735">
    <property type="term" value="F:structural constituent of ribosome"/>
    <property type="evidence" value="ECO:0007669"/>
    <property type="project" value="InterPro"/>
</dbReference>
<dbReference type="GO" id="GO:0006412">
    <property type="term" value="P:translation"/>
    <property type="evidence" value="ECO:0007669"/>
    <property type="project" value="UniProtKB-UniRule"/>
</dbReference>
<dbReference type="Gene3D" id="3.30.1320.10">
    <property type="match status" value="1"/>
</dbReference>
<dbReference type="HAMAP" id="MF_00385">
    <property type="entry name" value="Ribosomal_bS16"/>
    <property type="match status" value="1"/>
</dbReference>
<dbReference type="InterPro" id="IPR000307">
    <property type="entry name" value="Ribosomal_bS16"/>
</dbReference>
<dbReference type="InterPro" id="IPR023803">
    <property type="entry name" value="Ribosomal_bS16_dom_sf"/>
</dbReference>
<dbReference type="NCBIfam" id="TIGR00002">
    <property type="entry name" value="S16"/>
    <property type="match status" value="1"/>
</dbReference>
<dbReference type="PANTHER" id="PTHR12919">
    <property type="entry name" value="30S RIBOSOMAL PROTEIN S16"/>
    <property type="match status" value="1"/>
</dbReference>
<dbReference type="PANTHER" id="PTHR12919:SF20">
    <property type="entry name" value="SMALL RIBOSOMAL SUBUNIT PROTEIN BS16M"/>
    <property type="match status" value="1"/>
</dbReference>
<dbReference type="Pfam" id="PF00886">
    <property type="entry name" value="Ribosomal_S16"/>
    <property type="match status" value="1"/>
</dbReference>
<dbReference type="SUPFAM" id="SSF54565">
    <property type="entry name" value="Ribosomal protein S16"/>
    <property type="match status" value="1"/>
</dbReference>
<gene>
    <name evidence="1" type="primary">rpsP</name>
    <name type="ordered locus">Atu2699</name>
    <name type="ORF">AGR_C_4893</name>
</gene>
<sequence>MALKIRLARGGSKKRPYYQIVVADARSPRDGRFLEKVGSWNPMLAKDNPLRVELKADLIKEWIAKGAQPTDRVLRFLAEAGLAERAARSNPEKALPGKRALERVAEKKQKAEDAAAAAAAEASAAE</sequence>
<keyword id="KW-1185">Reference proteome</keyword>
<keyword id="KW-0687">Ribonucleoprotein</keyword>
<keyword id="KW-0689">Ribosomal protein</keyword>
<protein>
    <recommendedName>
        <fullName evidence="1">Small ribosomal subunit protein bS16</fullName>
    </recommendedName>
    <alternativeName>
        <fullName evidence="3">30S ribosomal protein S16</fullName>
    </alternativeName>
</protein>
<name>RS16_AGRFC</name>
<reference key="1">
    <citation type="journal article" date="2001" name="Science">
        <title>The genome of the natural genetic engineer Agrobacterium tumefaciens C58.</title>
        <authorList>
            <person name="Wood D.W."/>
            <person name="Setubal J.C."/>
            <person name="Kaul R."/>
            <person name="Monks D.E."/>
            <person name="Kitajima J.P."/>
            <person name="Okura V.K."/>
            <person name="Zhou Y."/>
            <person name="Chen L."/>
            <person name="Wood G.E."/>
            <person name="Almeida N.F. Jr."/>
            <person name="Woo L."/>
            <person name="Chen Y."/>
            <person name="Paulsen I.T."/>
            <person name="Eisen J.A."/>
            <person name="Karp P.D."/>
            <person name="Bovee D. Sr."/>
            <person name="Chapman P."/>
            <person name="Clendenning J."/>
            <person name="Deatherage G."/>
            <person name="Gillet W."/>
            <person name="Grant C."/>
            <person name="Kutyavin T."/>
            <person name="Levy R."/>
            <person name="Li M.-J."/>
            <person name="McClelland E."/>
            <person name="Palmieri A."/>
            <person name="Raymond C."/>
            <person name="Rouse G."/>
            <person name="Saenphimmachak C."/>
            <person name="Wu Z."/>
            <person name="Romero P."/>
            <person name="Gordon D."/>
            <person name="Zhang S."/>
            <person name="Yoo H."/>
            <person name="Tao Y."/>
            <person name="Biddle P."/>
            <person name="Jung M."/>
            <person name="Krespan W."/>
            <person name="Perry M."/>
            <person name="Gordon-Kamm B."/>
            <person name="Liao L."/>
            <person name="Kim S."/>
            <person name="Hendrick C."/>
            <person name="Zhao Z.-Y."/>
            <person name="Dolan M."/>
            <person name="Chumley F."/>
            <person name="Tingey S.V."/>
            <person name="Tomb J.-F."/>
            <person name="Gordon M.P."/>
            <person name="Olson M.V."/>
            <person name="Nester E.W."/>
        </authorList>
    </citation>
    <scope>NUCLEOTIDE SEQUENCE [LARGE SCALE GENOMIC DNA]</scope>
    <source>
        <strain>C58 / ATCC 33970</strain>
    </source>
</reference>
<reference key="2">
    <citation type="journal article" date="2001" name="Science">
        <title>Genome sequence of the plant pathogen and biotechnology agent Agrobacterium tumefaciens C58.</title>
        <authorList>
            <person name="Goodner B."/>
            <person name="Hinkle G."/>
            <person name="Gattung S."/>
            <person name="Miller N."/>
            <person name="Blanchard M."/>
            <person name="Qurollo B."/>
            <person name="Goldman B.S."/>
            <person name="Cao Y."/>
            <person name="Askenazi M."/>
            <person name="Halling C."/>
            <person name="Mullin L."/>
            <person name="Houmiel K."/>
            <person name="Gordon J."/>
            <person name="Vaudin M."/>
            <person name="Iartchouk O."/>
            <person name="Epp A."/>
            <person name="Liu F."/>
            <person name="Wollam C."/>
            <person name="Allinger M."/>
            <person name="Doughty D."/>
            <person name="Scott C."/>
            <person name="Lappas C."/>
            <person name="Markelz B."/>
            <person name="Flanagan C."/>
            <person name="Crowell C."/>
            <person name="Gurson J."/>
            <person name="Lomo C."/>
            <person name="Sear C."/>
            <person name="Strub G."/>
            <person name="Cielo C."/>
            <person name="Slater S."/>
        </authorList>
    </citation>
    <scope>NUCLEOTIDE SEQUENCE [LARGE SCALE GENOMIC DNA]</scope>
    <source>
        <strain>C58 / ATCC 33970</strain>
    </source>
</reference>
<evidence type="ECO:0000255" key="1">
    <source>
        <dbReference type="HAMAP-Rule" id="MF_00385"/>
    </source>
</evidence>
<evidence type="ECO:0000256" key="2">
    <source>
        <dbReference type="SAM" id="MobiDB-lite"/>
    </source>
</evidence>
<evidence type="ECO:0000305" key="3"/>
<organism>
    <name type="scientific">Agrobacterium fabrum (strain C58 / ATCC 33970)</name>
    <name type="common">Agrobacterium tumefaciens (strain C58)</name>
    <dbReference type="NCBI Taxonomy" id="176299"/>
    <lineage>
        <taxon>Bacteria</taxon>
        <taxon>Pseudomonadati</taxon>
        <taxon>Pseudomonadota</taxon>
        <taxon>Alphaproteobacteria</taxon>
        <taxon>Hyphomicrobiales</taxon>
        <taxon>Rhizobiaceae</taxon>
        <taxon>Rhizobium/Agrobacterium group</taxon>
        <taxon>Agrobacterium</taxon>
        <taxon>Agrobacterium tumefaciens complex</taxon>
    </lineage>
</organism>
<proteinExistence type="inferred from homology"/>